<name>METK_MEDSF</name>
<gene>
    <name type="primary">SAMS</name>
</gene>
<reference key="1">
    <citation type="submission" date="2007-01" db="EMBL/GenBank/DDBJ databases">
        <title>Cloning of S-adenosyl-L-methionine synthetase gene from Medicago falcata L.</title>
        <authorList>
            <person name="Wang C."/>
            <person name="Guo Z."/>
            <person name="Pang C."/>
        </authorList>
    </citation>
    <scope>NUCLEOTIDE SEQUENCE [MRNA]</scope>
</reference>
<evidence type="ECO:0000250" key="1"/>
<evidence type="ECO:0000250" key="2">
    <source>
        <dbReference type="UniProtKB" id="P0A817"/>
    </source>
</evidence>
<evidence type="ECO:0000250" key="3">
    <source>
        <dbReference type="UniProtKB" id="P13444"/>
    </source>
</evidence>
<evidence type="ECO:0000250" key="4">
    <source>
        <dbReference type="UniProtKB" id="Q00266"/>
    </source>
</evidence>
<evidence type="ECO:0000250" key="5">
    <source>
        <dbReference type="UniProtKB" id="Q96551"/>
    </source>
</evidence>
<evidence type="ECO:0000305" key="6"/>
<protein>
    <recommendedName>
        <fullName>S-adenosylmethionine synthase</fullName>
        <shortName>AdoMet synthase</shortName>
        <ecNumber evidence="5">2.5.1.6</ecNumber>
    </recommendedName>
    <alternativeName>
        <fullName>Methionine adenosyltransferase</fullName>
        <shortName>MAT</shortName>
    </alternativeName>
</protein>
<organism>
    <name type="scientific">Medicago sativa subsp. falcata</name>
    <name type="common">Sickle medic</name>
    <name type="synonym">Medicago falcata</name>
    <dbReference type="NCBI Taxonomy" id="3878"/>
    <lineage>
        <taxon>Eukaryota</taxon>
        <taxon>Viridiplantae</taxon>
        <taxon>Streptophyta</taxon>
        <taxon>Embryophyta</taxon>
        <taxon>Tracheophyta</taxon>
        <taxon>Spermatophyta</taxon>
        <taxon>Magnoliopsida</taxon>
        <taxon>eudicotyledons</taxon>
        <taxon>Gunneridae</taxon>
        <taxon>Pentapetalae</taxon>
        <taxon>rosids</taxon>
        <taxon>fabids</taxon>
        <taxon>Fabales</taxon>
        <taxon>Fabaceae</taxon>
        <taxon>Papilionoideae</taxon>
        <taxon>50 kb inversion clade</taxon>
        <taxon>NPAAA clade</taxon>
        <taxon>Hologalegina</taxon>
        <taxon>IRL clade</taxon>
        <taxon>Trifolieae</taxon>
        <taxon>Medicago</taxon>
    </lineage>
</organism>
<feature type="chain" id="PRO_0000363029" description="S-adenosylmethionine synthase">
    <location>
        <begin position="1"/>
        <end position="396"/>
    </location>
</feature>
<feature type="binding site" evidence="3">
    <location>
        <position position="11"/>
    </location>
    <ligand>
        <name>Mg(2+)</name>
        <dbReference type="ChEBI" id="CHEBI:18420"/>
    </ligand>
</feature>
<feature type="binding site" description="in other chain" evidence="4">
    <location>
        <position position="17"/>
    </location>
    <ligand>
        <name>ATP</name>
        <dbReference type="ChEBI" id="CHEBI:30616"/>
        <note>ligand shared between two neighboring subunits</note>
    </ligand>
</feature>
<feature type="binding site" evidence="2">
    <location>
        <position position="45"/>
    </location>
    <ligand>
        <name>K(+)</name>
        <dbReference type="ChEBI" id="CHEBI:29103"/>
    </ligand>
</feature>
<feature type="binding site" description="in other chain" evidence="2">
    <location>
        <position position="58"/>
    </location>
    <ligand>
        <name>L-methionine</name>
        <dbReference type="ChEBI" id="CHEBI:57844"/>
        <note>ligand shared between two neighboring subunits</note>
    </ligand>
</feature>
<feature type="binding site" description="in other chain" evidence="2">
    <location>
        <position position="101"/>
    </location>
    <ligand>
        <name>L-methionine</name>
        <dbReference type="ChEBI" id="CHEBI:57844"/>
        <note>ligand shared between two neighboring subunits</note>
    </ligand>
</feature>
<feature type="binding site" description="in other chain" evidence="4">
    <location>
        <begin position="169"/>
        <end position="171"/>
    </location>
    <ligand>
        <name>ATP</name>
        <dbReference type="ChEBI" id="CHEBI:30616"/>
        <note>ligand shared between two neighboring subunits</note>
    </ligand>
</feature>
<feature type="binding site" description="in other chain" evidence="4">
    <location>
        <begin position="237"/>
        <end position="240"/>
    </location>
    <ligand>
        <name>ATP</name>
        <dbReference type="ChEBI" id="CHEBI:30616"/>
        <note>ligand shared between two neighboring subunits</note>
    </ligand>
</feature>
<feature type="binding site" description="in other chain" evidence="4">
    <location>
        <position position="248"/>
    </location>
    <ligand>
        <name>ATP</name>
        <dbReference type="ChEBI" id="CHEBI:30616"/>
        <note>ligand shared between two neighboring subunits</note>
    </ligand>
</feature>
<feature type="binding site" evidence="2">
    <location>
        <position position="248"/>
    </location>
    <ligand>
        <name>L-methionine</name>
        <dbReference type="ChEBI" id="CHEBI:57844"/>
        <note>ligand shared between two neighboring subunits</note>
    </ligand>
</feature>
<feature type="binding site" description="in other chain" evidence="2">
    <location>
        <begin position="254"/>
        <end position="255"/>
    </location>
    <ligand>
        <name>ATP</name>
        <dbReference type="ChEBI" id="CHEBI:30616"/>
        <note>ligand shared between two neighboring subunits</note>
    </ligand>
</feature>
<feature type="binding site" evidence="2">
    <location>
        <position position="271"/>
    </location>
    <ligand>
        <name>ATP</name>
        <dbReference type="ChEBI" id="CHEBI:30616"/>
        <note>ligand shared between two neighboring subunits</note>
    </ligand>
</feature>
<feature type="binding site" evidence="2">
    <location>
        <position position="275"/>
    </location>
    <ligand>
        <name>ATP</name>
        <dbReference type="ChEBI" id="CHEBI:30616"/>
        <note>ligand shared between two neighboring subunits</note>
    </ligand>
</feature>
<feature type="binding site" evidence="3">
    <location>
        <position position="279"/>
    </location>
    <ligand>
        <name>ATP</name>
        <dbReference type="ChEBI" id="CHEBI:30616"/>
        <note>ligand shared between two neighboring subunits</note>
    </ligand>
</feature>
<feature type="binding site" description="in other chain" evidence="2">
    <location>
        <position position="279"/>
    </location>
    <ligand>
        <name>L-methionine</name>
        <dbReference type="ChEBI" id="CHEBI:57844"/>
        <note>ligand shared between two neighboring subunits</note>
    </ligand>
</feature>
<dbReference type="EC" id="2.5.1.6" evidence="5"/>
<dbReference type="EMBL" id="EF408868">
    <property type="protein sequence ID" value="ABO77438.1"/>
    <property type="molecule type" value="mRNA"/>
</dbReference>
<dbReference type="SMR" id="A4ULF8"/>
<dbReference type="BRENDA" id="2.5.1.6">
    <property type="organism ID" value="3078"/>
</dbReference>
<dbReference type="UniPathway" id="UPA00315">
    <property type="reaction ID" value="UER00080"/>
</dbReference>
<dbReference type="GO" id="GO:0005737">
    <property type="term" value="C:cytoplasm"/>
    <property type="evidence" value="ECO:0007669"/>
    <property type="project" value="UniProtKB-SubCell"/>
</dbReference>
<dbReference type="GO" id="GO:0005524">
    <property type="term" value="F:ATP binding"/>
    <property type="evidence" value="ECO:0007669"/>
    <property type="project" value="UniProtKB-KW"/>
</dbReference>
<dbReference type="GO" id="GO:0046872">
    <property type="term" value="F:metal ion binding"/>
    <property type="evidence" value="ECO:0007669"/>
    <property type="project" value="UniProtKB-KW"/>
</dbReference>
<dbReference type="GO" id="GO:0004478">
    <property type="term" value="F:methionine adenosyltransferase activity"/>
    <property type="evidence" value="ECO:0007669"/>
    <property type="project" value="UniProtKB-EC"/>
</dbReference>
<dbReference type="GO" id="GO:0006730">
    <property type="term" value="P:one-carbon metabolic process"/>
    <property type="evidence" value="ECO:0007669"/>
    <property type="project" value="UniProtKB-KW"/>
</dbReference>
<dbReference type="GO" id="GO:0006556">
    <property type="term" value="P:S-adenosylmethionine biosynthetic process"/>
    <property type="evidence" value="ECO:0007669"/>
    <property type="project" value="UniProtKB-UniPathway"/>
</dbReference>
<dbReference type="CDD" id="cd18079">
    <property type="entry name" value="S-AdoMet_synt"/>
    <property type="match status" value="1"/>
</dbReference>
<dbReference type="FunFam" id="3.30.300.10:FF:000003">
    <property type="entry name" value="S-adenosylmethionine synthase"/>
    <property type="match status" value="1"/>
</dbReference>
<dbReference type="FunFam" id="3.30.300.10:FF:000004">
    <property type="entry name" value="S-adenosylmethionine synthase"/>
    <property type="match status" value="1"/>
</dbReference>
<dbReference type="FunFam" id="3.30.300.10:FF:000011">
    <property type="entry name" value="S-adenosylmethionine synthase"/>
    <property type="match status" value="1"/>
</dbReference>
<dbReference type="FunFam" id="3.30.300.10:FF:000021">
    <property type="entry name" value="S-adenosylmethionine synthetase 1"/>
    <property type="match status" value="1"/>
</dbReference>
<dbReference type="Gene3D" id="3.30.300.10">
    <property type="match status" value="3"/>
</dbReference>
<dbReference type="HAMAP" id="MF_00086">
    <property type="entry name" value="S_AdoMet_synth1"/>
    <property type="match status" value="1"/>
</dbReference>
<dbReference type="InterPro" id="IPR022631">
    <property type="entry name" value="ADOMET_SYNTHASE_CS"/>
</dbReference>
<dbReference type="InterPro" id="IPR022630">
    <property type="entry name" value="S-AdoMet_synt_C"/>
</dbReference>
<dbReference type="InterPro" id="IPR022629">
    <property type="entry name" value="S-AdoMet_synt_central"/>
</dbReference>
<dbReference type="InterPro" id="IPR022628">
    <property type="entry name" value="S-AdoMet_synt_N"/>
</dbReference>
<dbReference type="InterPro" id="IPR002133">
    <property type="entry name" value="S-AdoMet_synthetase"/>
</dbReference>
<dbReference type="InterPro" id="IPR022636">
    <property type="entry name" value="S-AdoMet_synthetase_sfam"/>
</dbReference>
<dbReference type="NCBIfam" id="TIGR01034">
    <property type="entry name" value="metK"/>
    <property type="match status" value="1"/>
</dbReference>
<dbReference type="PANTHER" id="PTHR11964">
    <property type="entry name" value="S-ADENOSYLMETHIONINE SYNTHETASE"/>
    <property type="match status" value="1"/>
</dbReference>
<dbReference type="Pfam" id="PF02773">
    <property type="entry name" value="S-AdoMet_synt_C"/>
    <property type="match status" value="1"/>
</dbReference>
<dbReference type="Pfam" id="PF02772">
    <property type="entry name" value="S-AdoMet_synt_M"/>
    <property type="match status" value="1"/>
</dbReference>
<dbReference type="Pfam" id="PF00438">
    <property type="entry name" value="S-AdoMet_synt_N"/>
    <property type="match status" value="1"/>
</dbReference>
<dbReference type="PIRSF" id="PIRSF000497">
    <property type="entry name" value="MAT"/>
    <property type="match status" value="1"/>
</dbReference>
<dbReference type="SUPFAM" id="SSF55973">
    <property type="entry name" value="S-adenosylmethionine synthetase"/>
    <property type="match status" value="3"/>
</dbReference>
<dbReference type="PROSITE" id="PS00376">
    <property type="entry name" value="ADOMET_SYNTHASE_1"/>
    <property type="match status" value="1"/>
</dbReference>
<dbReference type="PROSITE" id="PS00377">
    <property type="entry name" value="ADOMET_SYNTHASE_2"/>
    <property type="match status" value="1"/>
</dbReference>
<sequence length="396" mass="43159">MATETFLYTSESVNEGHPDKLCDQISDAVLDACLEQDPDSKVACETCTKTNMVMVFGEITTKANVDYEKIVRNTCRNIGFVSDDVGLDADNCKVLVNIEQQSPDIAQGVHGHLTKRPEEIGAGDQGHMFGYATDETPELMPLTHVLATKLGAKLTEVRKNGTCPWLRPDGKTQVTIEYFNDKGAMVPIRVHTVLISTQHDETVTNDEIAADLKQHVIKPVIPEKYLDEKTIFHLNPSGRFVIGGPHGDAGLTGRKIIIDTYGGWGAHGGGAFSGKDPTKVDRSGAYIVRQAAKSIVANGLARRCIVQVSYAIGVPEPLSVFVDSYGTGKIPDKEILNIVKETFDFRPGMISINLDLKRGGNNRFLKTAAYGHFGRDDADFTWEVVKPLKGGKLATA</sequence>
<proteinExistence type="evidence at transcript level"/>
<keyword id="KW-0067">ATP-binding</keyword>
<keyword id="KW-0170">Cobalt</keyword>
<keyword id="KW-0963">Cytoplasm</keyword>
<keyword id="KW-0460">Magnesium</keyword>
<keyword id="KW-0479">Metal-binding</keyword>
<keyword id="KW-0547">Nucleotide-binding</keyword>
<keyword id="KW-0554">One-carbon metabolism</keyword>
<keyword id="KW-0630">Potassium</keyword>
<keyword id="KW-0808">Transferase</keyword>
<comment type="function">
    <text evidence="5">Catalyzes the formation of S-adenosylmethionine from methionine and ATP. The reaction comprises two steps that are both catalyzed by the same enzyme: formation of S-adenosylmethionine (AdoMet) and triphosphate, and subsequent hydrolysis of the triphosphate.</text>
</comment>
<comment type="catalytic activity">
    <reaction evidence="5">
        <text>L-methionine + ATP + H2O = S-adenosyl-L-methionine + phosphate + diphosphate</text>
        <dbReference type="Rhea" id="RHEA:21080"/>
        <dbReference type="ChEBI" id="CHEBI:15377"/>
        <dbReference type="ChEBI" id="CHEBI:30616"/>
        <dbReference type="ChEBI" id="CHEBI:33019"/>
        <dbReference type="ChEBI" id="CHEBI:43474"/>
        <dbReference type="ChEBI" id="CHEBI:57844"/>
        <dbReference type="ChEBI" id="CHEBI:59789"/>
        <dbReference type="EC" id="2.5.1.6"/>
    </reaction>
</comment>
<comment type="cofactor">
    <cofactor evidence="5">
        <name>Mn(2+)</name>
        <dbReference type="ChEBI" id="CHEBI:29035"/>
    </cofactor>
    <cofactor evidence="5">
        <name>Mg(2+)</name>
        <dbReference type="ChEBI" id="CHEBI:18420"/>
    </cofactor>
    <cofactor evidence="5">
        <name>Co(2+)</name>
        <dbReference type="ChEBI" id="CHEBI:48828"/>
    </cofactor>
    <text evidence="3 5">Binds 2 divalent ions per subunit. The metal ions interact primarily with the substrate (By similarity). Can utilize magnesium, manganese or cobalt (in vitro) (By similarity).</text>
</comment>
<comment type="cofactor">
    <cofactor evidence="5">
        <name>K(+)</name>
        <dbReference type="ChEBI" id="CHEBI:29103"/>
    </cofactor>
    <text evidence="3">Binds 1 potassium ion per subunit. The potassium ion interacts primarily with the substrate (By similarity).</text>
</comment>
<comment type="pathway">
    <text evidence="5">Amino-acid biosynthesis; S-adenosyl-L-methionine biosynthesis; S-adenosyl-L-methionine from L-methionine: step 1/1.</text>
</comment>
<comment type="subunit">
    <text evidence="1">Homotetramer.</text>
</comment>
<comment type="subcellular location">
    <subcellularLocation>
        <location evidence="1">Cytoplasm</location>
    </subcellularLocation>
</comment>
<comment type="similarity">
    <text evidence="6">Belongs to the AdoMet synthase family.</text>
</comment>
<accession>A4ULF8</accession>